<evidence type="ECO:0000255" key="1"/>
<evidence type="ECO:0000256" key="2">
    <source>
        <dbReference type="SAM" id="MobiDB-lite"/>
    </source>
</evidence>
<evidence type="ECO:0000269" key="3">
    <source>
    </source>
</evidence>
<evidence type="ECO:0000303" key="4">
    <source>
    </source>
</evidence>
<evidence type="ECO:0000305" key="5"/>
<evidence type="ECO:0000305" key="6">
    <source>
    </source>
</evidence>
<evidence type="ECO:0000312" key="7">
    <source>
        <dbReference type="EMBL" id="EDO79511.1"/>
    </source>
</evidence>
<evidence type="ECO:0000312" key="8">
    <source>
        <dbReference type="EMBL" id="KAE8302175.1"/>
    </source>
</evidence>
<evidence type="ECO:0000312" key="9">
    <source>
        <dbReference type="Proteomes" id="UP000001548"/>
    </source>
</evidence>
<feature type="chain" id="PRO_0000459250" description="Intraflagellar transport protein 121">
    <location>
        <begin position="1"/>
        <end position="1528"/>
    </location>
</feature>
<feature type="repeat" description="WD 1" evidence="1">
    <location>
        <begin position="123"/>
        <end position="170"/>
    </location>
</feature>
<feature type="repeat" description="WD 2" evidence="1">
    <location>
        <begin position="244"/>
        <end position="285"/>
    </location>
</feature>
<feature type="repeat" description="WD 3" evidence="1">
    <location>
        <begin position="619"/>
        <end position="667"/>
    </location>
</feature>
<feature type="repeat" description="WD 4" evidence="1">
    <location>
        <begin position="759"/>
        <end position="798"/>
    </location>
</feature>
<feature type="region of interest" description="Disordered" evidence="2">
    <location>
        <begin position="914"/>
        <end position="933"/>
    </location>
</feature>
<feature type="compositionally biased region" description="Low complexity" evidence="2">
    <location>
        <begin position="920"/>
        <end position="933"/>
    </location>
</feature>
<name>IF121_GIAIC</name>
<sequence length="1528" mass="167997">MPSTAFILKCLEFTDTGEEVVLVAWNKTENYIAAGGQTGSIRILLLDFNSLSEQGYNISDLRTSTRNVRILMDKKLSLHDNALITSIAWNEKETKLATSDNRGLVFISSTDTGKWVRNLVNDSNRAAVVTTTWSPDASRILMVYVNGLVMLGTASGHRIYNGTINKGSAPKFGLIASNAIEVFILAWGNAICCYNFSGEEVWSVSPLLATNSDNHFVHGCWGHSSESAQLTALSPSRDPACNGSSMPQIKINSFSGDSMTLIAVTSNGMLCVYSVLTGELLSSVSTEIIPVNVQLSPGSHMLCITGSVQSSDSNFGLHQLRGNQGVSGDSTKHTAIVVVYRTADLATISRLRLPERVATSSSWDSTGLRLVLAAGKNIYIATVRPSYNHYLMNDGTMAFTMSNYTSTILSTASFVDDTQRPPMNVGALFSKKTAEEAPSSAISSFEERILDRARCNECVLFWKPGLQAPYQRWPARMIAVVGCKSYIAILTLKTNTSGTRKHHTHICFYTSVCAPIFSIDLPYVPFYTAGSGNYLVCASSSRISVVDIRGLANEAIGLVDAENVSYVYEWHADSYPLAQDRELTVARLTVNNPIVGVACCDVALFVARQDERVQRYSLPSLTLLETMTIKPNQEYMQTNCNGTVLACLHEDGSLVFYYTQSYYSEFLYAHHNPAEQQQQKQQPAPKPPQAQAHLTLLDTDADTAAALGFGQDSVVETESAPYVIKNSVLKNVNVSSGELLQDSAQARSGGVSTIPPYSPELIGIWGLVFSPEDPNLVAVSSQYKVIVFHLDTQTREDSIQTSAHIIGFSGLSIIASYLDEVSHNISSLDHAYYVLETQMLRELQEIIFGQQQAPESFNPLVDAALNRGCLNKNMISLTSDSKSGVPSSLFDSVAPKTIAIKPVRGQQPVGDMVDSGLDVTASNSSQPSTQTSQALYSKDGQISINLAGAVEYVKSHPSVHLYRIVAEASLITLRLEVASYFYIRAGDYVSYNFCESLLRLQSQDQRRAEMLMLIGNFSSAEHVYKQVLGRPDLIVKTQTDLQMWLSIIRAAKLSRTPGGNLLIDDKLLEKAHKSIGLYYMRQQQYAIASDFLQKSGDPYLYAESLFAARRYAELKALAVSLPVDEFANCIAKVAVMLARLGDVEGASEALVRVNDPHSAVHISLQLKRFDIAAAIAGKHNILHIIDRELSVYLKQLLAAGDDQGALELLRKTKQGEVIAAVIINLVLKELQTIFVNRTFPMPPGLFSKLRRIIVLAGKEATYVQREQAKKNLQAHASAAPDCMLTEQATNAAIDTFINEDDNSKAVHDVKAKNTGKEASSLEHELENAQSRLRSVPVIWRIARQTRFIVLSSYMLYIGNPEQALWPAIEAANYYHRTNDSQSSADPCIQYLSRIALPIAAQAALLFGDFELASNLLELIEADTELPASERDQLEQMSVLIYSEYNITSVPSKRKDNYQINCGHCNTLLPPYCGMCEKCHWQTPICVRTGQPIKSDKMDKTVLCQMCRSLATMGKTHLSVCPLCHEPYQ</sequence>
<protein>
    <recommendedName>
        <fullName evidence="4">Intraflagellar transport protein 121</fullName>
        <shortName evidence="4">IFT121</shortName>
    </recommendedName>
    <alternativeName>
        <fullName evidence="7">Tubby superfamily protein</fullName>
    </alternativeName>
    <alternativeName>
        <fullName evidence="8">WD40 repeat protein</fullName>
    </alternativeName>
</protein>
<keyword id="KW-0966">Cell projection</keyword>
<keyword id="KW-0969">Cilium</keyword>
<keyword id="KW-0970">Cilium biogenesis/degradation</keyword>
<keyword id="KW-0963">Cytoplasm</keyword>
<keyword id="KW-0206">Cytoskeleton</keyword>
<keyword id="KW-0282">Flagellum</keyword>
<keyword id="KW-1185">Reference proteome</keyword>
<keyword id="KW-0677">Repeat</keyword>
<keyword id="KW-0853">WD repeat</keyword>
<dbReference type="EMBL" id="AACB02000016">
    <property type="protein sequence ID" value="EDO79511.1"/>
    <property type="status" value="ALT_INIT"/>
    <property type="molecule type" value="Genomic_DNA"/>
</dbReference>
<dbReference type="EMBL" id="AACB03000004">
    <property type="protein sequence ID" value="KAE8302175.1"/>
    <property type="molecule type" value="Genomic_DNA"/>
</dbReference>
<dbReference type="RefSeq" id="XP_001707185.1">
    <property type="nucleotide sequence ID" value="XM_001707133.1"/>
</dbReference>
<dbReference type="SMR" id="A0A644F0T7"/>
<dbReference type="STRING" id="184922.A0A644F0T7"/>
<dbReference type="EnsemblProtists" id="EDO79511">
    <property type="protein sequence ID" value="EDO79511"/>
    <property type="gene ID" value="GL50803_87817"/>
</dbReference>
<dbReference type="GeneID" id="5700083"/>
<dbReference type="KEGG" id="gla:GL50803_0087817"/>
<dbReference type="VEuPathDB" id="GiardiaDB:GL50803_87817"/>
<dbReference type="HOGENOM" id="CLU_246853_0_0_1"/>
<dbReference type="InParanoid" id="A0A644F0T7"/>
<dbReference type="Proteomes" id="UP000001548">
    <property type="component" value="Chromosome 2"/>
</dbReference>
<dbReference type="GO" id="GO:0097729">
    <property type="term" value="C:9+2 motile cilium"/>
    <property type="evidence" value="ECO:0000314"/>
    <property type="project" value="UniProtKB"/>
</dbReference>
<dbReference type="GO" id="GO:0005930">
    <property type="term" value="C:axoneme"/>
    <property type="evidence" value="ECO:0000314"/>
    <property type="project" value="UniProtKB"/>
</dbReference>
<dbReference type="GO" id="GO:0036064">
    <property type="term" value="C:ciliary basal body"/>
    <property type="evidence" value="ECO:0000314"/>
    <property type="project" value="UniProtKB"/>
</dbReference>
<dbReference type="GO" id="GO:1990900">
    <property type="term" value="C:ciliary pocket collar"/>
    <property type="evidence" value="ECO:0000314"/>
    <property type="project" value="UniProtKB"/>
</dbReference>
<dbReference type="GO" id="GO:0097542">
    <property type="term" value="C:ciliary tip"/>
    <property type="evidence" value="ECO:0000305"/>
    <property type="project" value="UniProtKB"/>
</dbReference>
<dbReference type="GO" id="GO:0030991">
    <property type="term" value="C:intraciliary transport particle A"/>
    <property type="evidence" value="ECO:0000305"/>
    <property type="project" value="UniProtKB"/>
</dbReference>
<dbReference type="GO" id="GO:0035720">
    <property type="term" value="P:intraciliary anterograde transport"/>
    <property type="evidence" value="ECO:0000305"/>
    <property type="project" value="UniProtKB"/>
</dbReference>
<dbReference type="GO" id="GO:0035721">
    <property type="term" value="P:intraciliary retrograde transport"/>
    <property type="evidence" value="ECO:0000305"/>
    <property type="project" value="UniProtKB"/>
</dbReference>
<dbReference type="GO" id="GO:0042073">
    <property type="term" value="P:intraciliary transport"/>
    <property type="evidence" value="ECO:0000318"/>
    <property type="project" value="GO_Central"/>
</dbReference>
<dbReference type="GO" id="GO:0035735">
    <property type="term" value="P:intraciliary transport involved in cilium assembly"/>
    <property type="evidence" value="ECO:0000305"/>
    <property type="project" value="UniProtKB"/>
</dbReference>
<dbReference type="Gene3D" id="2.130.10.10">
    <property type="entry name" value="YVTN repeat-like/Quinoprotein amine dehydrogenase"/>
    <property type="match status" value="1"/>
</dbReference>
<dbReference type="InterPro" id="IPR056158">
    <property type="entry name" value="Beta-prop_WDR35_2nd"/>
</dbReference>
<dbReference type="InterPro" id="IPR056159">
    <property type="entry name" value="Beta-prop_WDR35_TULP_N"/>
</dbReference>
<dbReference type="InterPro" id="IPR011047">
    <property type="entry name" value="Quinoprotein_ADH-like_sf"/>
</dbReference>
<dbReference type="InterPro" id="IPR015943">
    <property type="entry name" value="WD40/YVTN_repeat-like_dom_sf"/>
</dbReference>
<dbReference type="InterPro" id="IPR056170">
    <property type="entry name" value="Znf_IFT121-like"/>
</dbReference>
<dbReference type="PANTHER" id="PTHR15722:SF8">
    <property type="entry name" value="ANAPHASE-PROMOTING COMPLEX SUBUNIT 4-LIKE WD40 DOMAIN-CONTAINING PROTEIN"/>
    <property type="match status" value="1"/>
</dbReference>
<dbReference type="PANTHER" id="PTHR15722">
    <property type="entry name" value="IFT140/172-RELATED"/>
    <property type="match status" value="1"/>
</dbReference>
<dbReference type="Pfam" id="PF23390">
    <property type="entry name" value="Beta-prop_WDR35_2nd"/>
    <property type="match status" value="1"/>
</dbReference>
<dbReference type="Pfam" id="PF24797">
    <property type="entry name" value="Beta-prop_WDR35_TULP_N"/>
    <property type="match status" value="1"/>
</dbReference>
<dbReference type="Pfam" id="PF23145">
    <property type="entry name" value="Zf_2nd_IFT121"/>
    <property type="match status" value="1"/>
</dbReference>
<dbReference type="SUPFAM" id="SSF101908">
    <property type="entry name" value="Putative isomerase YbhE"/>
    <property type="match status" value="1"/>
</dbReference>
<dbReference type="SUPFAM" id="SSF50998">
    <property type="entry name" value="Quinoprotein alcohol dehydrogenase-like"/>
    <property type="match status" value="1"/>
</dbReference>
<gene>
    <name evidence="8" type="ORF">GL50803_0087817</name>
    <name evidence="7" type="ORF">GL50803_87817</name>
</gene>
<comment type="function">
    <text evidence="6">Component of the intraflagellar transport complex A (IFT-A) involved in flagellar assembly (PubMed:31855176).</text>
</comment>
<comment type="subcellular location">
    <subcellularLocation>
        <location evidence="3">Cell projection</location>
        <location evidence="3">Cilium</location>
        <location evidence="3">Flagellum</location>
    </subcellularLocation>
    <subcellularLocation>
        <location evidence="3">Cytoplasm</location>
        <location evidence="3">Cytoskeleton</location>
        <location evidence="3">Flagellum axoneme</location>
    </subcellularLocation>
    <subcellularLocation>
        <location evidence="3">Cytoplasm</location>
        <location evidence="3">Cytoskeleton</location>
        <location evidence="3">Flagellum basal body</location>
    </subcellularLocation>
    <text evidence="3">Localizes to the cytoplasmic and membrane-bound portions of each of the eight axonemes, localizing particularly at the flagellar pores and at the distal flagellar tips. Localizes to the basal bodies.</text>
</comment>
<comment type="sequence caution" evidence="5">
    <conflict type="erroneous initiation">
        <sequence resource="EMBL-CDS" id="EDO79511"/>
    </conflict>
    <text>Extended N-terminus.</text>
</comment>
<accession>A0A644F0T7</accession>
<accession>A8BGH0</accession>
<proteinExistence type="predicted"/>
<organism evidence="8 9">
    <name type="scientific">Giardia intestinalis (strain ATCC 50803 / WB clone C6)</name>
    <name type="common">Giardia lamblia</name>
    <dbReference type="NCBI Taxonomy" id="184922"/>
    <lineage>
        <taxon>Eukaryota</taxon>
        <taxon>Metamonada</taxon>
        <taxon>Diplomonadida</taxon>
        <taxon>Hexamitidae</taxon>
        <taxon>Giardiinae</taxon>
        <taxon>Giardia</taxon>
    </lineage>
</organism>
<reference evidence="7 8 9" key="1">
    <citation type="journal article" date="2007" name="Science">
        <title>Genomic minimalism in the early diverging intestinal parasite Giardia lamblia.</title>
        <authorList>
            <person name="Morrison H.G."/>
            <person name="McArthur A.G."/>
            <person name="Gillin F.D."/>
            <person name="Aley S.B."/>
            <person name="Adam R.D."/>
            <person name="Olsen G.J."/>
            <person name="Best A.A."/>
            <person name="Cande W.Z."/>
            <person name="Chen F."/>
            <person name="Cipriano M.J."/>
            <person name="Davids B.J."/>
            <person name="Dawson S.C."/>
            <person name="Elmendorf H.G."/>
            <person name="Hehl A.B."/>
            <person name="Holder M.E."/>
            <person name="Huse S.M."/>
            <person name="Kim U.U."/>
            <person name="Lasek-Nesselquist E."/>
            <person name="Manning G."/>
            <person name="Nigam A."/>
            <person name="Nixon J.E.J."/>
            <person name="Palm D."/>
            <person name="Passamaneck N.E."/>
            <person name="Prabhu A."/>
            <person name="Reich C.I."/>
            <person name="Reiner D.S."/>
            <person name="Samuelson J."/>
            <person name="Svard S.G."/>
            <person name="Sogin M.L."/>
        </authorList>
    </citation>
    <scope>NUCLEOTIDE SEQUENCE [LARGE SCALE GENOMIC DNA]</scope>
    <source>
        <strain evidence="9">ATCC 50803 / WB clone C6</strain>
    </source>
</reference>
<reference key="2">
    <citation type="journal article" date="2019" name="Elife">
        <title>Length-dependent disassembly maintains four different flagellar lengths in Giardia.</title>
        <authorList>
            <person name="McInally S.G."/>
            <person name="Kondev J."/>
            <person name="Dawson S.C."/>
        </authorList>
    </citation>
    <scope>FUNCTION</scope>
    <scope>SUBCELLULAR LOCATION</scope>
    <source>
        <strain evidence="4">ATCC 50803 / WB clone C6</strain>
    </source>
</reference>